<organism>
    <name type="scientific">Ovis aries</name>
    <name type="common">Sheep</name>
    <dbReference type="NCBI Taxonomy" id="9940"/>
    <lineage>
        <taxon>Eukaryota</taxon>
        <taxon>Metazoa</taxon>
        <taxon>Chordata</taxon>
        <taxon>Craniata</taxon>
        <taxon>Vertebrata</taxon>
        <taxon>Euteleostomi</taxon>
        <taxon>Mammalia</taxon>
        <taxon>Eutheria</taxon>
        <taxon>Laurasiatheria</taxon>
        <taxon>Artiodactyla</taxon>
        <taxon>Ruminantia</taxon>
        <taxon>Pecora</taxon>
        <taxon>Bovidae</taxon>
        <taxon>Caprinae</taxon>
        <taxon>Ovis</taxon>
    </lineage>
</organism>
<proteinExistence type="evidence at transcript level"/>
<comment type="function">
    <text evidence="1 3">Nuclear hormone receptor. The steroid hormones and their receptors are involved in the regulation of eukaryotic gene expression and affect cellular proliferation and differentiation in target tissues. Ligand-dependent nuclear transactivation involves either direct homodimer binding to a palindromic estrogen response element (ERE) sequence or association with other DNA-binding transcription factors, such as AP-1/c-Jun, c-Fos, ATF-2, Sp1 and Sp3, to mediate ERE-independent signaling. Ligand binding induces a conformational change allowing subsequent or combinatorial association with multiprotein coactivator complexes through LXXLL motifs of their respective components. Mutual transrepression occurs between the estrogen receptor (ER) and NF-kappa-B in a cell-type specific manner. Decreases NF-kappa-B DNA-binding activity and inhibits NF-kappa-B-mediated transcription from the IL6 promoter and displace RELA/p65 and associated coregulators from the promoter. Recruited to the NF-kappa-B response element of the CCL2 and IL8 promoters and can displace CREBBP. Present with NF-kappa-B components RELA/p65 and NFKB1/p50 on ERE sequences. Can also act synergistically with NF-kappa-B to activate transcription involving respective recruitment adjacent response elements; the function involves CREBBP. Can activate the transcriptional activity of TFF1. Also mediates membrane-initiated estrogen signaling involving various kinase cascades. Essential for MTA1-mediated transcriptional regulation of BRCA1 and BCAS3 (By similarity). Maintains neuronal survival in response to ischemic reperfusion injury when in the presence of circulating estradiol (17-beta-estradiol/E2) (By similarity).</text>
</comment>
<comment type="subunit">
    <text evidence="2 3 4">Binds DNA as a homodimer. Can form a heterodimer with ESR2. Interacts with coactivator NCOA5. Interacts with PELP1, the interaction is enhanced by 17-beta-estradiol; the interaction increases ESR1 transcriptional activity (By similarity). Interacts with NCOA7; the interaction is ligand-inducible. Interacts with AKAP13, CUEDC2, HEXIM1, KDM5A, MAP1S, SMARD1, and UBE1C. Interacts with MUC1; the interaction is stimulated by 7 beta-estradiol (E2) and enhances ESR1-mediated transcription. Interacts with DNTTIP2, and UIMC1. Interacts with KMT2D/MLL2. Interacts with ATAD2; the interaction is enhanced by estradiol. Interacts with KIF18A and LDB1. Interacts with RLIM (via its C-terminus). Interacts with MACROD1. Interacts with SH2D4A and PLCG. Interacts with SH2D4A; the interaction blocks binding to PLCG and inhibits estrogen-induced cell proliferation. Interacts with DYNLL1. Interacts with CCDC62; the interaction requires estradiol and appears to enhance the transcription of target genes. Interacts with NR2C1; the interaction prevents homodimerization of ESR1 and suppresses its transcriptional activity and cell growth. Interacts with DNAAF4. Interacts with PRMT2. Interacts with RBFOX2. Interacts with EP300; the interaction is estrogen-dependent and enhanced by CITED1. Interacts with CITED1; the interaction is estrogen-dependent. Interacts with FAM120B, FOXL2, PHB2 and SLC30A9. Interacts with coactivators NCOA3 and NCOA6. Interacts with STK3/MST2 only in the presence of SAV1 and vice-versa. Binds to CSNK1D. Interacts with NCOA2; NCOA2 can interact with ESR1 AF-1 and AF-2 domains simultaneously and mediate their transcriptional synergy. Interacts with DDX5. Interacts with NCOA1; the interaction seems to require a self-association of N-terminal and C-terminal regions. Interacts with ZNF366, DDX17, NFKB1, RELA, SP1 and SP3. Interacts with NRIP1. Interacts with GPER1; the interaction occurs in an estrogen-dependent manner. Interacts with CLOCK and the interaction is stimulated by estrogen. Interacts with TRIP4 (ufmylated); estrogen dependent. Interacts with LMTK3; the interaction phosphorylates ESR1 (in vitro) and protects it against proteasomal degradation. Interacts with CCAR2 (via N-terminus) in a ligand-independent manner. Interacts with ZFHX3. Interacts with SFR1 in a ligand-dependent and -independent manner. Interacts with DCAF13, LATS1 and DCAF1; regulates ESR1 ubiquitination and ubiquitin-mediated proteasomal degradation. Interacts (via DNA-binding domain) with POU4F2 (C-terminus); this interaction increases the estrogen receptor ESR1 transcriptional activity in a DNA- and ligand 17-beta-estradiol-independent manner. Interacts with ESRRB isoform 1. Interacts with UBE3A and WBP2. Interacts with GTF2B. Interacts with RBM39. In the absence of hormonal ligand, interacts with TACC1 (By similarity). Interacts with PI3KR1 or PI3KR2 and PTK2/FAK1 (By similarity). Interacts with SRC (By similarity). Interacts with BAG1; the interaction is promoted in the absence of estradiol (17-beta-estradiol/E2) (By similarity). Interacts with and ubiquitinated by STUB1; the interaction is promoted in the absence of estradiol (17-beta-estradiol/E2) (By similarity). Interacts with NEDD8 (By similarity).</text>
</comment>
<comment type="subcellular location">
    <subcellularLocation>
        <location evidence="5">Nucleus</location>
    </subcellularLocation>
    <subcellularLocation>
        <location evidence="1">Cytoplasm</location>
    </subcellularLocation>
    <subcellularLocation>
        <location evidence="1">Golgi apparatus</location>
    </subcellularLocation>
    <subcellularLocation>
        <location evidence="1">Cell membrane</location>
    </subcellularLocation>
    <text evidence="1">Colocalizes with ZDHHC7 and ZDHHC21 in the Golgi apparatus where most probably palmitoylation occurs. Associated with the plasma membrane when palmitoylated.</text>
</comment>
<comment type="domain">
    <text evidence="1">Composed of three domains: a modulating N-terminal domain, a DNA-binding domain and a C-terminal ligand-binding domain. The modulating domain, also known as A/B or AF-1 domain has a ligand-independent transactivation function. The C-terminus contains a ligand-dependent transactivation domain, also known as E/F or AF-2 domain which overlaps with the ligand binding domain. AF-1 and AF-2 activate transcription independently and synergistically and act in a promoter- and cell-specific manner (By similarity).</text>
</comment>
<comment type="PTM">
    <text evidence="2 3">Ubiquitinated; regulated by LATS1 via DCAF1 it leads to ESR1 proteasomal degradation. Deubiquitinated by OTUB1 (By similarity). Ubiquitinated by STUB1/CHIP; in the CA1 hippocampal region following loss of endogenous circulating estradiol (17-beta-estradiol/E2) (By similarity). Ubiquitinated by UBR5, leading to its degradation: UBR5 specifically recognizes and binds ligand-bound ESR1 when it is not associated with coactivators (NCOAs). In presence of NCOAs, the UBR5-degron is not accessible, preventing its ubiquitination and degradation (By similarity).</text>
</comment>
<comment type="PTM">
    <text evidence="2">Dimethylated by PRMT1. Demethylated by JMJD6.</text>
</comment>
<comment type="PTM">
    <text evidence="1">Palmitoylated by ZDHHC7 and ZDHHC21. This modification is required for plasma membrane targeting and for rapid intracellular signaling via ERK and AKT kinases and cAMP generation, but not for signaling mediated by the nuclear hormone receptor (By similarity).</text>
</comment>
<comment type="PTM">
    <text evidence="2">Phosphorylated by cyclin A/CDK2 and CK1. Phosphorylation probably enhances transcriptional activity. Dephosphorylation by PPP5C inhibits its transactivation activity (By similarity). Phosphorylated by LMTK3 (in vitro) (By similarity).</text>
</comment>
<comment type="similarity">
    <text evidence="7">Belongs to the nuclear hormone receptor family. NR3 subfamily.</text>
</comment>
<name>ESR1_SHEEP</name>
<reference key="1">
    <citation type="journal article" date="1996" name="Biol. Reprod.">
        <title>Estrogen enhances endometrial estrogen receptor gene expression by a posttranscriptional mechanism in the ovariectomized ewe.</title>
        <authorList>
            <person name="Ing N.H."/>
            <person name="Spencer T.E."/>
            <person name="Bazer F.W."/>
        </authorList>
    </citation>
    <scope>NUCLEOTIDE SEQUENCE [MRNA]</scope>
</reference>
<evidence type="ECO:0000250" key="1"/>
<evidence type="ECO:0000250" key="2">
    <source>
        <dbReference type="UniProtKB" id="P03372"/>
    </source>
</evidence>
<evidence type="ECO:0000250" key="3">
    <source>
        <dbReference type="UniProtKB" id="P06211"/>
    </source>
</evidence>
<evidence type="ECO:0000250" key="4">
    <source>
        <dbReference type="UniProtKB" id="P19785"/>
    </source>
</evidence>
<evidence type="ECO:0000255" key="5">
    <source>
        <dbReference type="PROSITE-ProRule" id="PRU00407"/>
    </source>
</evidence>
<evidence type="ECO:0000256" key="6">
    <source>
        <dbReference type="SAM" id="MobiDB-lite"/>
    </source>
</evidence>
<evidence type="ECO:0000305" key="7"/>
<sequence>PSGYAVREAGPPAYYRPNSDNRRQGGRERLASTSDKGSMAVESAKETRYCAVCNDYASGYHYGVWSCEGCKAFFKRSIQGHNDYMCPATNQCTIDKNRRKSCQACRLRKCY</sequence>
<gene>
    <name type="primary">ESR1</name>
    <name type="synonym">ESR</name>
    <name type="synonym">NR3A1</name>
</gene>
<dbReference type="EMBL" id="U30299">
    <property type="protein sequence ID" value="AAB52517.1"/>
    <property type="molecule type" value="mRNA"/>
</dbReference>
<dbReference type="SMR" id="P49885"/>
<dbReference type="STRING" id="9940.ENSOARP00000003565"/>
<dbReference type="BindingDB" id="P49885"/>
<dbReference type="ChEMBL" id="CHEMBL2021744"/>
<dbReference type="PaxDb" id="9940-ENSOARP00000003565"/>
<dbReference type="eggNOG" id="KOG3575">
    <property type="taxonomic scope" value="Eukaryota"/>
</dbReference>
<dbReference type="Proteomes" id="UP000002356">
    <property type="component" value="Unplaced"/>
</dbReference>
<dbReference type="GO" id="GO:0005794">
    <property type="term" value="C:Golgi apparatus"/>
    <property type="evidence" value="ECO:0007669"/>
    <property type="project" value="UniProtKB-SubCell"/>
</dbReference>
<dbReference type="GO" id="GO:0005634">
    <property type="term" value="C:nucleus"/>
    <property type="evidence" value="ECO:0000250"/>
    <property type="project" value="UniProtKB"/>
</dbReference>
<dbReference type="GO" id="GO:0005886">
    <property type="term" value="C:plasma membrane"/>
    <property type="evidence" value="ECO:0007669"/>
    <property type="project" value="UniProtKB-SubCell"/>
</dbReference>
<dbReference type="GO" id="GO:0030284">
    <property type="term" value="F:nuclear estrogen receptor activity"/>
    <property type="evidence" value="ECO:0007669"/>
    <property type="project" value="InterPro"/>
</dbReference>
<dbReference type="GO" id="GO:0043565">
    <property type="term" value="F:sequence-specific DNA binding"/>
    <property type="evidence" value="ECO:0000250"/>
    <property type="project" value="UniProtKB"/>
</dbReference>
<dbReference type="GO" id="GO:0005496">
    <property type="term" value="F:steroid binding"/>
    <property type="evidence" value="ECO:0000250"/>
    <property type="project" value="UniProtKB"/>
</dbReference>
<dbReference type="GO" id="GO:0008270">
    <property type="term" value="F:zinc ion binding"/>
    <property type="evidence" value="ECO:0007669"/>
    <property type="project" value="UniProtKB-KW"/>
</dbReference>
<dbReference type="GO" id="GO:0071392">
    <property type="term" value="P:cellular response to estradiol stimulus"/>
    <property type="evidence" value="ECO:0000250"/>
    <property type="project" value="UniProtKB"/>
</dbReference>
<dbReference type="GO" id="GO:0043124">
    <property type="term" value="P:negative regulation of canonical NF-kappaB signal transduction"/>
    <property type="evidence" value="ECO:0000250"/>
    <property type="project" value="UniProtKB"/>
</dbReference>
<dbReference type="GO" id="GO:0034392">
    <property type="term" value="P:negative regulation of smooth muscle cell apoptotic process"/>
    <property type="evidence" value="ECO:0000250"/>
    <property type="project" value="UniProtKB"/>
</dbReference>
<dbReference type="GO" id="GO:0030518">
    <property type="term" value="P:nuclear receptor-mediated steroid hormone signaling pathway"/>
    <property type="evidence" value="ECO:0000250"/>
    <property type="project" value="UniProtKB"/>
</dbReference>
<dbReference type="GO" id="GO:0007200">
    <property type="term" value="P:phospholipase C-activating G protein-coupled receptor signaling pathway"/>
    <property type="evidence" value="ECO:0000250"/>
    <property type="project" value="UniProtKB"/>
</dbReference>
<dbReference type="GO" id="GO:0007204">
    <property type="term" value="P:positive regulation of cytosolic calcium ion concentration"/>
    <property type="evidence" value="ECO:0000250"/>
    <property type="project" value="UniProtKB"/>
</dbReference>
<dbReference type="GO" id="GO:0051091">
    <property type="term" value="P:positive regulation of DNA-binding transcription factor activity"/>
    <property type="evidence" value="ECO:0000250"/>
    <property type="project" value="UniProtKB"/>
</dbReference>
<dbReference type="GO" id="GO:0045893">
    <property type="term" value="P:positive regulation of DNA-templated transcription"/>
    <property type="evidence" value="ECO:0000250"/>
    <property type="project" value="UniProtKB"/>
</dbReference>
<dbReference type="GO" id="GO:0045429">
    <property type="term" value="P:positive regulation of nitric oxide biosynthetic process"/>
    <property type="evidence" value="ECO:0000250"/>
    <property type="project" value="UniProtKB"/>
</dbReference>
<dbReference type="GO" id="GO:0051000">
    <property type="term" value="P:positive regulation of nitric-oxide synthase activity"/>
    <property type="evidence" value="ECO:0000250"/>
    <property type="project" value="UniProtKB"/>
</dbReference>
<dbReference type="FunFam" id="3.30.50.10:FF:000139">
    <property type="entry name" value="Estrogen receptor beta a variant b"/>
    <property type="match status" value="1"/>
</dbReference>
<dbReference type="Gene3D" id="3.30.50.10">
    <property type="entry name" value="Erythroid Transcription Factor GATA-1, subunit A"/>
    <property type="match status" value="1"/>
</dbReference>
<dbReference type="InterPro" id="IPR046944">
    <property type="entry name" value="Estr_rcpt_N"/>
</dbReference>
<dbReference type="InterPro" id="IPR050200">
    <property type="entry name" value="Nuclear_hormone_rcpt_NR3"/>
</dbReference>
<dbReference type="InterPro" id="IPR001628">
    <property type="entry name" value="Znf_hrmn_rcpt"/>
</dbReference>
<dbReference type="InterPro" id="IPR013088">
    <property type="entry name" value="Znf_NHR/GATA"/>
</dbReference>
<dbReference type="PANTHER" id="PTHR48092">
    <property type="entry name" value="KNIRPS-RELATED PROTEIN-RELATED"/>
    <property type="match status" value="1"/>
</dbReference>
<dbReference type="Pfam" id="PF02159">
    <property type="entry name" value="Oest_recep"/>
    <property type="match status" value="1"/>
</dbReference>
<dbReference type="Pfam" id="PF00105">
    <property type="entry name" value="zf-C4"/>
    <property type="match status" value="1"/>
</dbReference>
<dbReference type="PRINTS" id="PR00047">
    <property type="entry name" value="STROIDFINGER"/>
</dbReference>
<dbReference type="SMART" id="SM00399">
    <property type="entry name" value="ZnF_C4"/>
    <property type="match status" value="1"/>
</dbReference>
<dbReference type="SUPFAM" id="SSF57716">
    <property type="entry name" value="Glucocorticoid receptor-like (DNA-binding domain)"/>
    <property type="match status" value="1"/>
</dbReference>
<dbReference type="PROSITE" id="PS00031">
    <property type="entry name" value="NUCLEAR_REC_DBD_1"/>
    <property type="match status" value="1"/>
</dbReference>
<dbReference type="PROSITE" id="PS51030">
    <property type="entry name" value="NUCLEAR_REC_DBD_2"/>
    <property type="match status" value="1"/>
</dbReference>
<keyword id="KW-0010">Activator</keyword>
<keyword id="KW-1003">Cell membrane</keyword>
<keyword id="KW-0963">Cytoplasm</keyword>
<keyword id="KW-0238">DNA-binding</keyword>
<keyword id="KW-0333">Golgi apparatus</keyword>
<keyword id="KW-0446">Lipid-binding</keyword>
<keyword id="KW-0449">Lipoprotein</keyword>
<keyword id="KW-0472">Membrane</keyword>
<keyword id="KW-0479">Metal-binding</keyword>
<keyword id="KW-0539">Nucleus</keyword>
<keyword id="KW-0564">Palmitate</keyword>
<keyword id="KW-0597">Phosphoprotein</keyword>
<keyword id="KW-0675">Receptor</keyword>
<keyword id="KW-1185">Reference proteome</keyword>
<keyword id="KW-0754">Steroid-binding</keyword>
<keyword id="KW-0804">Transcription</keyword>
<keyword id="KW-0805">Transcription regulation</keyword>
<keyword id="KW-0832">Ubl conjugation</keyword>
<keyword id="KW-0862">Zinc</keyword>
<keyword id="KW-0863">Zinc-finger</keyword>
<accession>P49885</accession>
<protein>
    <recommendedName>
        <fullName>Estrogen receptor</fullName>
        <shortName>ER</shortName>
    </recommendedName>
    <alternativeName>
        <fullName>ER-alpha</fullName>
    </alternativeName>
    <alternativeName>
        <fullName>Estradiol receptor</fullName>
    </alternativeName>
    <alternativeName>
        <fullName>Nuclear receptor subfamily 3 group A member 1</fullName>
    </alternativeName>
</protein>
<feature type="chain" id="PRO_0000053624" description="Estrogen receptor">
    <location>
        <begin position="1" status="less than"/>
        <end position="111" status="greater than"/>
    </location>
</feature>
<feature type="DNA-binding region" description="Nuclear receptor" evidence="5">
    <location>
        <begin position="50"/>
        <end position="111" status="greater than"/>
    </location>
</feature>
<feature type="zinc finger region" description="NR C4-type" evidence="5">
    <location>
        <begin position="50"/>
        <end position="70"/>
    </location>
</feature>
<feature type="zinc finger region" description="NR C4-type" evidence="5">
    <location>
        <begin position="86"/>
        <end position="110"/>
    </location>
</feature>
<feature type="region of interest" description="Modulating">
    <location>
        <begin position="1" status="less than"/>
        <end position="49"/>
    </location>
</feature>
<feature type="region of interest" description="Disordered" evidence="6">
    <location>
        <begin position="1"/>
        <end position="42"/>
    </location>
</feature>
<feature type="compositionally biased region" description="Basic and acidic residues" evidence="6">
    <location>
        <begin position="19"/>
        <end position="30"/>
    </location>
</feature>
<feature type="modified residue" description="Phosphoserine" evidence="2">
    <location>
        <position position="32"/>
    </location>
</feature>
<feature type="non-terminal residue">
    <location>
        <position position="1"/>
    </location>
</feature>
<feature type="non-terminal residue">
    <location>
        <position position="111"/>
    </location>
</feature>